<evidence type="ECO:0000250" key="1"/>
<evidence type="ECO:0000305" key="2"/>
<protein>
    <recommendedName>
        <fullName>Peptide methionine sulfoxide reductase MsrA 2</fullName>
        <shortName>Protein-methionine-S-oxide reductase 2</shortName>
        <ecNumber>1.8.4.11</ecNumber>
    </recommendedName>
    <alternativeName>
        <fullName>Peptide-methionine (S)-S-oxide reductase 2</fullName>
        <shortName>Peptide Met(O) reductase 2</shortName>
    </alternativeName>
</protein>
<gene>
    <name type="primary">msrA2</name>
    <name type="ordered locus">slr1795</name>
</gene>
<dbReference type="EC" id="1.8.4.11"/>
<dbReference type="EMBL" id="BA000022">
    <property type="protein sequence ID" value="BAA16815.1"/>
    <property type="molecule type" value="Genomic_DNA"/>
</dbReference>
<dbReference type="PIR" id="S74663">
    <property type="entry name" value="S74663"/>
</dbReference>
<dbReference type="SMR" id="P72800"/>
<dbReference type="IntAct" id="P72800">
    <property type="interactions" value="1"/>
</dbReference>
<dbReference type="STRING" id="1148.gene:10497672"/>
<dbReference type="PaxDb" id="1148-1651888"/>
<dbReference type="EnsemblBacteria" id="BAA16815">
    <property type="protein sequence ID" value="BAA16815"/>
    <property type="gene ID" value="BAA16815"/>
</dbReference>
<dbReference type="KEGG" id="syn:slr1795"/>
<dbReference type="eggNOG" id="COG0225">
    <property type="taxonomic scope" value="Bacteria"/>
</dbReference>
<dbReference type="InParanoid" id="P72800"/>
<dbReference type="PhylomeDB" id="P72800"/>
<dbReference type="Proteomes" id="UP000001425">
    <property type="component" value="Chromosome"/>
</dbReference>
<dbReference type="GO" id="GO:0033744">
    <property type="term" value="F:L-methionine:thioredoxin-disulfide S-oxidoreductase activity"/>
    <property type="evidence" value="ECO:0007669"/>
    <property type="project" value="RHEA"/>
</dbReference>
<dbReference type="GO" id="GO:0008113">
    <property type="term" value="F:peptide-methionine (S)-S-oxide reductase activity"/>
    <property type="evidence" value="ECO:0007669"/>
    <property type="project" value="UniProtKB-UniRule"/>
</dbReference>
<dbReference type="GO" id="GO:0036211">
    <property type="term" value="P:protein modification process"/>
    <property type="evidence" value="ECO:0007669"/>
    <property type="project" value="UniProtKB-UniRule"/>
</dbReference>
<dbReference type="Gene3D" id="3.30.1060.10">
    <property type="entry name" value="Peptide methionine sulphoxide reductase MsrA"/>
    <property type="match status" value="1"/>
</dbReference>
<dbReference type="HAMAP" id="MF_01401">
    <property type="entry name" value="MsrA"/>
    <property type="match status" value="1"/>
</dbReference>
<dbReference type="InterPro" id="IPR002569">
    <property type="entry name" value="Met_Sox_Rdtase_MsrA_dom"/>
</dbReference>
<dbReference type="InterPro" id="IPR036509">
    <property type="entry name" value="Met_Sox_Rdtase_MsrA_sf"/>
</dbReference>
<dbReference type="NCBIfam" id="TIGR00401">
    <property type="entry name" value="msrA"/>
    <property type="match status" value="1"/>
</dbReference>
<dbReference type="PANTHER" id="PTHR43774">
    <property type="entry name" value="PEPTIDE METHIONINE SULFOXIDE REDUCTASE"/>
    <property type="match status" value="1"/>
</dbReference>
<dbReference type="PANTHER" id="PTHR43774:SF1">
    <property type="entry name" value="PEPTIDE METHIONINE SULFOXIDE REDUCTASE MSRA 2"/>
    <property type="match status" value="1"/>
</dbReference>
<dbReference type="Pfam" id="PF01625">
    <property type="entry name" value="PMSR"/>
    <property type="match status" value="1"/>
</dbReference>
<dbReference type="SUPFAM" id="SSF55068">
    <property type="entry name" value="Peptide methionine sulfoxide reductase"/>
    <property type="match status" value="1"/>
</dbReference>
<organism>
    <name type="scientific">Synechocystis sp. (strain ATCC 27184 / PCC 6803 / Kazusa)</name>
    <dbReference type="NCBI Taxonomy" id="1111708"/>
    <lineage>
        <taxon>Bacteria</taxon>
        <taxon>Bacillati</taxon>
        <taxon>Cyanobacteriota</taxon>
        <taxon>Cyanophyceae</taxon>
        <taxon>Synechococcales</taxon>
        <taxon>Merismopediaceae</taxon>
        <taxon>Synechocystis</taxon>
    </lineage>
</organism>
<keyword id="KW-0560">Oxidoreductase</keyword>
<keyword id="KW-1185">Reference proteome</keyword>
<name>MSRA2_SYNY3</name>
<reference key="1">
    <citation type="journal article" date="1996" name="DNA Res.">
        <title>Sequence analysis of the genome of the unicellular cyanobacterium Synechocystis sp. strain PCC6803. II. Sequence determination of the entire genome and assignment of potential protein-coding regions.</title>
        <authorList>
            <person name="Kaneko T."/>
            <person name="Sato S."/>
            <person name="Kotani H."/>
            <person name="Tanaka A."/>
            <person name="Asamizu E."/>
            <person name="Nakamura Y."/>
            <person name="Miyajima N."/>
            <person name="Hirosawa M."/>
            <person name="Sugiura M."/>
            <person name="Sasamoto S."/>
            <person name="Kimura T."/>
            <person name="Hosouchi T."/>
            <person name="Matsuno A."/>
            <person name="Muraki A."/>
            <person name="Nakazaki N."/>
            <person name="Naruo K."/>
            <person name="Okumura S."/>
            <person name="Shimpo S."/>
            <person name="Takeuchi C."/>
            <person name="Wada T."/>
            <person name="Watanabe A."/>
            <person name="Yamada M."/>
            <person name="Yasuda M."/>
            <person name="Tabata S."/>
        </authorList>
    </citation>
    <scope>NUCLEOTIDE SEQUENCE [LARGE SCALE GENOMIC DNA]</scope>
    <source>
        <strain>ATCC 27184 / PCC 6803 / Kazusa</strain>
    </source>
</reference>
<proteinExistence type="inferred from homology"/>
<feature type="chain" id="PRO_0000138602" description="Peptide methionine sulfoxide reductase MsrA 2">
    <location>
        <begin position="1"/>
        <end position="214"/>
    </location>
</feature>
<feature type="active site" evidence="1">
    <location>
        <position position="45"/>
    </location>
</feature>
<accession>P72800</accession>
<comment type="function">
    <text evidence="1">Has an important function as a repair enzyme for proteins that have been inactivated by oxidation. Catalyzes the reversible oxidation-reduction of methionine sulfoxide in proteins to methionine (By similarity).</text>
</comment>
<comment type="catalytic activity">
    <reaction>
        <text>L-methionyl-[protein] + [thioredoxin]-disulfide + H2O = L-methionyl-(S)-S-oxide-[protein] + [thioredoxin]-dithiol</text>
        <dbReference type="Rhea" id="RHEA:14217"/>
        <dbReference type="Rhea" id="RHEA-COMP:10698"/>
        <dbReference type="Rhea" id="RHEA-COMP:10700"/>
        <dbReference type="Rhea" id="RHEA-COMP:12313"/>
        <dbReference type="Rhea" id="RHEA-COMP:12315"/>
        <dbReference type="ChEBI" id="CHEBI:15377"/>
        <dbReference type="ChEBI" id="CHEBI:16044"/>
        <dbReference type="ChEBI" id="CHEBI:29950"/>
        <dbReference type="ChEBI" id="CHEBI:44120"/>
        <dbReference type="ChEBI" id="CHEBI:50058"/>
        <dbReference type="EC" id="1.8.4.11"/>
    </reaction>
</comment>
<comment type="catalytic activity">
    <reaction>
        <text>[thioredoxin]-disulfide + L-methionine + H2O = L-methionine (S)-S-oxide + [thioredoxin]-dithiol</text>
        <dbReference type="Rhea" id="RHEA:19993"/>
        <dbReference type="Rhea" id="RHEA-COMP:10698"/>
        <dbReference type="Rhea" id="RHEA-COMP:10700"/>
        <dbReference type="ChEBI" id="CHEBI:15377"/>
        <dbReference type="ChEBI" id="CHEBI:29950"/>
        <dbReference type="ChEBI" id="CHEBI:50058"/>
        <dbReference type="ChEBI" id="CHEBI:57844"/>
        <dbReference type="ChEBI" id="CHEBI:58772"/>
        <dbReference type="EC" id="1.8.4.11"/>
    </reaction>
</comment>
<comment type="similarity">
    <text evidence="2">Belongs to the MsrA Met sulfoxide reductase family.</text>
</comment>
<sequence>MGLAIAVGSFLISPFSKVIPDPVVDINPVSTTARGTEKAVFAGGCFWGLEAMFEEVRGVKDVQTGYSGGTEATANYARVSGGGTDHAESIEIVYDPAQVSYGELLKIFFSVGHDPTQVNRQGVDQGRQYRSAIFATTPEQKQVAQAYIDQLEESQAFDQAIATEVNDFDAFYPAEDYHQDFVQRNPAHPYVLVHDLPKLRKFRQQYSDKLKAQS</sequence>